<accession>Q9UHL0</accession>
<accession>B2R6Z0</accession>
<accession>Q5XVN2</accession>
<accession>Q86W81</accession>
<accession>Q8IYP1</accession>
<reference key="1">
    <citation type="journal article" date="1999" name="J. Biol. Chem.">
        <title>A novel gonadotropin-regulated testicular RNA helicase: a new member of the DEAD-box family.</title>
        <authorList>
            <person name="Tang P.-Z."/>
            <person name="Tsai-Morris C.-H."/>
            <person name="Dufau M.L."/>
        </authorList>
    </citation>
    <scope>NUCLEOTIDE SEQUENCE [GENOMIC DNA / MRNA] (ISOFORM 1)</scope>
    <scope>FUNCTION</scope>
    <scope>SUBCELLULAR LOCATION</scope>
    <scope>TISSUE SPECIFICITY</scope>
    <scope>INDUCTION</scope>
    <source>
        <tissue>Testis</tissue>
    </source>
</reference>
<reference key="2">
    <citation type="submission" date="2003-05" db="EMBL/GenBank/DDBJ databases">
        <authorList>
            <person name="Tang P.-Z."/>
            <person name="Tsai-Morris C.-H."/>
            <person name="Dufau M.L."/>
        </authorList>
    </citation>
    <scope>SEQUENCE REVISION TO N-TERMINUS</scope>
    <scope>ALTERNATIVE INITIATION</scope>
    <scope>TISSUE SPECIFICITY</scope>
</reference>
<reference key="3">
    <citation type="journal article" date="2004" name="Nat. Genet.">
        <title>Complete sequencing and characterization of 21,243 full-length human cDNAs.</title>
        <authorList>
            <person name="Ota T."/>
            <person name="Suzuki Y."/>
            <person name="Nishikawa T."/>
            <person name="Otsuki T."/>
            <person name="Sugiyama T."/>
            <person name="Irie R."/>
            <person name="Wakamatsu A."/>
            <person name="Hayashi K."/>
            <person name="Sato H."/>
            <person name="Nagai K."/>
            <person name="Kimura K."/>
            <person name="Makita H."/>
            <person name="Sekine M."/>
            <person name="Obayashi M."/>
            <person name="Nishi T."/>
            <person name="Shibahara T."/>
            <person name="Tanaka T."/>
            <person name="Ishii S."/>
            <person name="Yamamoto J."/>
            <person name="Saito K."/>
            <person name="Kawai Y."/>
            <person name="Isono Y."/>
            <person name="Nakamura Y."/>
            <person name="Nagahari K."/>
            <person name="Murakami K."/>
            <person name="Yasuda T."/>
            <person name="Iwayanagi T."/>
            <person name="Wagatsuma M."/>
            <person name="Shiratori A."/>
            <person name="Sudo H."/>
            <person name="Hosoiri T."/>
            <person name="Kaku Y."/>
            <person name="Kodaira H."/>
            <person name="Kondo H."/>
            <person name="Sugawara M."/>
            <person name="Takahashi M."/>
            <person name="Kanda K."/>
            <person name="Yokoi T."/>
            <person name="Furuya T."/>
            <person name="Kikkawa E."/>
            <person name="Omura Y."/>
            <person name="Abe K."/>
            <person name="Kamihara K."/>
            <person name="Katsuta N."/>
            <person name="Sato K."/>
            <person name="Tanikawa M."/>
            <person name="Yamazaki M."/>
            <person name="Ninomiya K."/>
            <person name="Ishibashi T."/>
            <person name="Yamashita H."/>
            <person name="Murakawa K."/>
            <person name="Fujimori K."/>
            <person name="Tanai H."/>
            <person name="Kimata M."/>
            <person name="Watanabe M."/>
            <person name="Hiraoka S."/>
            <person name="Chiba Y."/>
            <person name="Ishida S."/>
            <person name="Ono Y."/>
            <person name="Takiguchi S."/>
            <person name="Watanabe S."/>
            <person name="Yosida M."/>
            <person name="Hotuta T."/>
            <person name="Kusano J."/>
            <person name="Kanehori K."/>
            <person name="Takahashi-Fujii A."/>
            <person name="Hara H."/>
            <person name="Tanase T.-O."/>
            <person name="Nomura Y."/>
            <person name="Togiya S."/>
            <person name="Komai F."/>
            <person name="Hara R."/>
            <person name="Takeuchi K."/>
            <person name="Arita M."/>
            <person name="Imose N."/>
            <person name="Musashino K."/>
            <person name="Yuuki H."/>
            <person name="Oshima A."/>
            <person name="Sasaki N."/>
            <person name="Aotsuka S."/>
            <person name="Yoshikawa Y."/>
            <person name="Matsunawa H."/>
            <person name="Ichihara T."/>
            <person name="Shiohata N."/>
            <person name="Sano S."/>
            <person name="Moriya S."/>
            <person name="Momiyama H."/>
            <person name="Satoh N."/>
            <person name="Takami S."/>
            <person name="Terashima Y."/>
            <person name="Suzuki O."/>
            <person name="Nakagawa S."/>
            <person name="Senoh A."/>
            <person name="Mizoguchi H."/>
            <person name="Goto Y."/>
            <person name="Shimizu F."/>
            <person name="Wakebe H."/>
            <person name="Hishigaki H."/>
            <person name="Watanabe T."/>
            <person name="Sugiyama A."/>
            <person name="Takemoto M."/>
            <person name="Kawakami B."/>
            <person name="Yamazaki M."/>
            <person name="Watanabe K."/>
            <person name="Kumagai A."/>
            <person name="Itakura S."/>
            <person name="Fukuzumi Y."/>
            <person name="Fujimori Y."/>
            <person name="Komiyama M."/>
            <person name="Tashiro H."/>
            <person name="Tanigami A."/>
            <person name="Fujiwara T."/>
            <person name="Ono T."/>
            <person name="Yamada K."/>
            <person name="Fujii Y."/>
            <person name="Ozaki K."/>
            <person name="Hirao M."/>
            <person name="Ohmori Y."/>
            <person name="Kawabata A."/>
            <person name="Hikiji T."/>
            <person name="Kobatake N."/>
            <person name="Inagaki H."/>
            <person name="Ikema Y."/>
            <person name="Okamoto S."/>
            <person name="Okitani R."/>
            <person name="Kawakami T."/>
            <person name="Noguchi S."/>
            <person name="Itoh T."/>
            <person name="Shigeta K."/>
            <person name="Senba T."/>
            <person name="Matsumura K."/>
            <person name="Nakajima Y."/>
            <person name="Mizuno T."/>
            <person name="Morinaga M."/>
            <person name="Sasaki M."/>
            <person name="Togashi T."/>
            <person name="Oyama M."/>
            <person name="Hata H."/>
            <person name="Watanabe M."/>
            <person name="Komatsu T."/>
            <person name="Mizushima-Sugano J."/>
            <person name="Satoh T."/>
            <person name="Shirai Y."/>
            <person name="Takahashi Y."/>
            <person name="Nakagawa K."/>
            <person name="Okumura K."/>
            <person name="Nagase T."/>
            <person name="Nomura N."/>
            <person name="Kikuchi H."/>
            <person name="Masuho Y."/>
            <person name="Yamashita R."/>
            <person name="Nakai K."/>
            <person name="Yada T."/>
            <person name="Nakamura Y."/>
            <person name="Ohara O."/>
            <person name="Isogai T."/>
            <person name="Sugano S."/>
        </authorList>
    </citation>
    <scope>NUCLEOTIDE SEQUENCE [LARGE SCALE MRNA] (ISOFORM 2)</scope>
    <source>
        <tissue>Testis</tissue>
    </source>
</reference>
<reference key="4">
    <citation type="submission" date="2005-07" db="EMBL/GenBank/DDBJ databases">
        <authorList>
            <person name="Mural R.J."/>
            <person name="Istrail S."/>
            <person name="Sutton G.G."/>
            <person name="Florea L."/>
            <person name="Halpern A.L."/>
            <person name="Mobarry C.M."/>
            <person name="Lippert R."/>
            <person name="Walenz B."/>
            <person name="Shatkay H."/>
            <person name="Dew I."/>
            <person name="Miller J.R."/>
            <person name="Flanigan M.J."/>
            <person name="Edwards N.J."/>
            <person name="Bolanos R."/>
            <person name="Fasulo D."/>
            <person name="Halldorsson B.V."/>
            <person name="Hannenhalli S."/>
            <person name="Turner R."/>
            <person name="Yooseph S."/>
            <person name="Lu F."/>
            <person name="Nusskern D.R."/>
            <person name="Shue B.C."/>
            <person name="Zheng X.H."/>
            <person name="Zhong F."/>
            <person name="Delcher A.L."/>
            <person name="Huson D.H."/>
            <person name="Kravitz S.A."/>
            <person name="Mouchard L."/>
            <person name="Reinert K."/>
            <person name="Remington K.A."/>
            <person name="Clark A.G."/>
            <person name="Waterman M.S."/>
            <person name="Eichler E.E."/>
            <person name="Adams M.D."/>
            <person name="Hunkapiller M.W."/>
            <person name="Myers E.W."/>
            <person name="Venter J.C."/>
        </authorList>
    </citation>
    <scope>NUCLEOTIDE SEQUENCE [LARGE SCALE GENOMIC DNA]</scope>
</reference>
<reference key="5">
    <citation type="journal article" date="2004" name="Genome Res.">
        <title>The status, quality, and expansion of the NIH full-length cDNA project: the Mammalian Gene Collection (MGC).</title>
        <authorList>
            <consortium name="The MGC Project Team"/>
        </authorList>
    </citation>
    <scope>NUCLEOTIDE SEQUENCE [LARGE SCALE MRNA] (ISOFORM 2)</scope>
    <source>
        <tissue>Medulla oblongata</tissue>
    </source>
</reference>
<reference key="6">
    <citation type="journal article" date="2010" name="PLoS ONE">
        <title>Comparative structural analysis of human DEAD-box RNA helicases.</title>
        <authorList>
            <person name="Schutz P."/>
            <person name="Karlberg T."/>
            <person name="van den Berg S."/>
            <person name="Collins R."/>
            <person name="Lehtio L."/>
            <person name="Hogbom M."/>
            <person name="Holmberg-Schiavone L."/>
            <person name="Tempel W."/>
            <person name="Park H.W."/>
            <person name="Hammarstrom M."/>
            <person name="Moche M."/>
            <person name="Thorsell A.G."/>
            <person name="Schuler H."/>
        </authorList>
    </citation>
    <scope>X-RAY CRYSTALLOGRAPHY (2.8 ANGSTROMS) OF 307-479</scope>
</reference>
<dbReference type="EC" id="3.6.4.13"/>
<dbReference type="EMBL" id="AF155140">
    <property type="protein sequence ID" value="AAF21371.2"/>
    <property type="molecule type" value="mRNA"/>
</dbReference>
<dbReference type="EMBL" id="AY735312">
    <property type="protein sequence ID" value="AAU84667.1"/>
    <property type="molecule type" value="Genomic_DNA"/>
</dbReference>
<dbReference type="EMBL" id="AY735301">
    <property type="protein sequence ID" value="AAU84667.1"/>
    <property type="status" value="JOINED"/>
    <property type="molecule type" value="Genomic_DNA"/>
</dbReference>
<dbReference type="EMBL" id="AY735302">
    <property type="protein sequence ID" value="AAU84667.1"/>
    <property type="status" value="JOINED"/>
    <property type="molecule type" value="Genomic_DNA"/>
</dbReference>
<dbReference type="EMBL" id="AY735303">
    <property type="protein sequence ID" value="AAU84667.1"/>
    <property type="status" value="JOINED"/>
    <property type="molecule type" value="Genomic_DNA"/>
</dbReference>
<dbReference type="EMBL" id="AY735304">
    <property type="protein sequence ID" value="AAU84667.1"/>
    <property type="status" value="JOINED"/>
    <property type="molecule type" value="Genomic_DNA"/>
</dbReference>
<dbReference type="EMBL" id="AY735305">
    <property type="protein sequence ID" value="AAU84667.1"/>
    <property type="status" value="JOINED"/>
    <property type="molecule type" value="Genomic_DNA"/>
</dbReference>
<dbReference type="EMBL" id="AY735306">
    <property type="protein sequence ID" value="AAU84667.1"/>
    <property type="status" value="JOINED"/>
    <property type="molecule type" value="Genomic_DNA"/>
</dbReference>
<dbReference type="EMBL" id="AY735307">
    <property type="protein sequence ID" value="AAU84667.1"/>
    <property type="status" value="JOINED"/>
    <property type="molecule type" value="Genomic_DNA"/>
</dbReference>
<dbReference type="EMBL" id="AY735308">
    <property type="protein sequence ID" value="AAU84667.1"/>
    <property type="status" value="JOINED"/>
    <property type="molecule type" value="Genomic_DNA"/>
</dbReference>
<dbReference type="EMBL" id="AY735309">
    <property type="protein sequence ID" value="AAU84667.1"/>
    <property type="status" value="JOINED"/>
    <property type="molecule type" value="Genomic_DNA"/>
</dbReference>
<dbReference type="EMBL" id="AY735310">
    <property type="protein sequence ID" value="AAU84667.1"/>
    <property type="status" value="JOINED"/>
    <property type="molecule type" value="Genomic_DNA"/>
</dbReference>
<dbReference type="EMBL" id="AY735311">
    <property type="protein sequence ID" value="AAU84667.1"/>
    <property type="status" value="JOINED"/>
    <property type="molecule type" value="Genomic_DNA"/>
</dbReference>
<dbReference type="EMBL" id="AK312772">
    <property type="protein sequence ID" value="BAG35637.1"/>
    <property type="molecule type" value="mRNA"/>
</dbReference>
<dbReference type="EMBL" id="CH471065">
    <property type="protein sequence ID" value="EAW67669.1"/>
    <property type="molecule type" value="Genomic_DNA"/>
</dbReference>
<dbReference type="EMBL" id="BC035388">
    <property type="protein sequence ID" value="AAH35388.2"/>
    <property type="molecule type" value="mRNA"/>
</dbReference>
<dbReference type="EMBL" id="BC050360">
    <property type="protein sequence ID" value="AAH50360.2"/>
    <property type="molecule type" value="mRNA"/>
</dbReference>
<dbReference type="CCDS" id="CCDS44766.1">
    <molecule id="Q9UHL0-1"/>
</dbReference>
<dbReference type="CCDS" id="CCDS81646.1">
    <molecule id="Q9UHL0-2"/>
</dbReference>
<dbReference type="RefSeq" id="NP_001317367.1">
    <molecule id="Q9UHL0-2"/>
    <property type="nucleotide sequence ID" value="NM_001330438.2"/>
</dbReference>
<dbReference type="RefSeq" id="NP_037396.3">
    <molecule id="Q9UHL0-1"/>
    <property type="nucleotide sequence ID" value="NM_013264.4"/>
</dbReference>
<dbReference type="PDB" id="2RB4">
    <property type="method" value="X-ray"/>
    <property type="resolution" value="2.80 A"/>
    <property type="chains" value="A/B=307-479"/>
</dbReference>
<dbReference type="PDBsum" id="2RB4"/>
<dbReference type="SMR" id="Q9UHL0"/>
<dbReference type="BioGRID" id="118884">
    <property type="interactions" value="6"/>
</dbReference>
<dbReference type="FunCoup" id="Q9UHL0">
    <property type="interactions" value="1023"/>
</dbReference>
<dbReference type="IntAct" id="Q9UHL0">
    <property type="interactions" value="5"/>
</dbReference>
<dbReference type="STRING" id="9606.ENSP00000263576"/>
<dbReference type="iPTMnet" id="Q9UHL0"/>
<dbReference type="PhosphoSitePlus" id="Q9UHL0"/>
<dbReference type="BioMuta" id="DDX25"/>
<dbReference type="DMDM" id="61222937"/>
<dbReference type="jPOST" id="Q9UHL0"/>
<dbReference type="MassIVE" id="Q9UHL0"/>
<dbReference type="PaxDb" id="9606-ENSP00000263576"/>
<dbReference type="PeptideAtlas" id="Q9UHL0"/>
<dbReference type="ProteomicsDB" id="84372">
    <molecule id="Q9UHL0-1"/>
</dbReference>
<dbReference type="ProteomicsDB" id="84373">
    <molecule id="Q9UHL0-2"/>
</dbReference>
<dbReference type="Antibodypedia" id="9318">
    <property type="antibodies" value="63 antibodies from 21 providers"/>
</dbReference>
<dbReference type="DNASU" id="29118"/>
<dbReference type="Ensembl" id="ENST00000263576.11">
    <molecule id="Q9UHL0-1"/>
    <property type="protein sequence ID" value="ENSP00000263576.6"/>
    <property type="gene ID" value="ENSG00000109832.14"/>
</dbReference>
<dbReference type="Ensembl" id="ENST00000525943.1">
    <molecule id="Q9UHL0-2"/>
    <property type="protein sequence ID" value="ENSP00000490224.1"/>
    <property type="gene ID" value="ENSG00000109832.14"/>
</dbReference>
<dbReference type="GeneID" id="29118"/>
<dbReference type="KEGG" id="hsa:29118"/>
<dbReference type="MANE-Select" id="ENST00000263576.11">
    <property type="protein sequence ID" value="ENSP00000263576.6"/>
    <property type="RefSeq nucleotide sequence ID" value="NM_013264.5"/>
    <property type="RefSeq protein sequence ID" value="NP_037396.3"/>
</dbReference>
<dbReference type="UCSC" id="uc001qcz.6">
    <molecule id="Q9UHL0-1"/>
    <property type="organism name" value="human"/>
</dbReference>
<dbReference type="AGR" id="HGNC:18698"/>
<dbReference type="CTD" id="29118"/>
<dbReference type="DisGeNET" id="29118"/>
<dbReference type="GeneCards" id="DDX25"/>
<dbReference type="HGNC" id="HGNC:18698">
    <property type="gene designation" value="DDX25"/>
</dbReference>
<dbReference type="HPA" id="ENSG00000109832">
    <property type="expression patterns" value="Tissue enriched (testis)"/>
</dbReference>
<dbReference type="MalaCards" id="DDX25"/>
<dbReference type="MIM" id="607663">
    <property type="type" value="gene"/>
</dbReference>
<dbReference type="neXtProt" id="NX_Q9UHL0"/>
<dbReference type="OpenTargets" id="ENSG00000109832"/>
<dbReference type="PharmGKB" id="PA38644"/>
<dbReference type="VEuPathDB" id="HostDB:ENSG00000109832"/>
<dbReference type="eggNOG" id="KOG0332">
    <property type="taxonomic scope" value="Eukaryota"/>
</dbReference>
<dbReference type="GeneTree" id="ENSGT00940000159712"/>
<dbReference type="InParanoid" id="Q9UHL0"/>
<dbReference type="OMA" id="DFKNLCM"/>
<dbReference type="OrthoDB" id="10265785at2759"/>
<dbReference type="PAN-GO" id="Q9UHL0">
    <property type="GO annotations" value="5 GO annotations based on evolutionary models"/>
</dbReference>
<dbReference type="PhylomeDB" id="Q9UHL0"/>
<dbReference type="TreeFam" id="TF314957"/>
<dbReference type="BRENDA" id="3.6.4.13">
    <property type="organism ID" value="2681"/>
</dbReference>
<dbReference type="PathwayCommons" id="Q9UHL0"/>
<dbReference type="SignaLink" id="Q9UHL0"/>
<dbReference type="BioGRID-ORCS" id="29118">
    <property type="hits" value="7 hits in 1149 CRISPR screens"/>
</dbReference>
<dbReference type="ChiTaRS" id="DDX25">
    <property type="organism name" value="human"/>
</dbReference>
<dbReference type="EvolutionaryTrace" id="Q9UHL0"/>
<dbReference type="GenomeRNAi" id="29118"/>
<dbReference type="Pharos" id="Q9UHL0">
    <property type="development level" value="Tbio"/>
</dbReference>
<dbReference type="PRO" id="PR:Q9UHL0"/>
<dbReference type="Proteomes" id="UP000005640">
    <property type="component" value="Chromosome 11"/>
</dbReference>
<dbReference type="RNAct" id="Q9UHL0">
    <property type="molecule type" value="protein"/>
</dbReference>
<dbReference type="Bgee" id="ENSG00000109832">
    <property type="expression patterns" value="Expressed in left testis and 129 other cell types or tissues"/>
</dbReference>
<dbReference type="ExpressionAtlas" id="Q9UHL0">
    <property type="expression patterns" value="baseline and differential"/>
</dbReference>
<dbReference type="GO" id="GO:0033391">
    <property type="term" value="C:chromatoid body"/>
    <property type="evidence" value="ECO:0000250"/>
    <property type="project" value="UniProtKB"/>
</dbReference>
<dbReference type="GO" id="GO:0005737">
    <property type="term" value="C:cytoplasm"/>
    <property type="evidence" value="ECO:0000250"/>
    <property type="project" value="UniProtKB"/>
</dbReference>
<dbReference type="GO" id="GO:0010494">
    <property type="term" value="C:cytoplasmic stress granule"/>
    <property type="evidence" value="ECO:0000318"/>
    <property type="project" value="GO_Central"/>
</dbReference>
<dbReference type="GO" id="GO:0005634">
    <property type="term" value="C:nucleus"/>
    <property type="evidence" value="ECO:0000250"/>
    <property type="project" value="UniProtKB"/>
</dbReference>
<dbReference type="GO" id="GO:0005524">
    <property type="term" value="F:ATP binding"/>
    <property type="evidence" value="ECO:0000250"/>
    <property type="project" value="UniProtKB"/>
</dbReference>
<dbReference type="GO" id="GO:0016887">
    <property type="term" value="F:ATP hydrolysis activity"/>
    <property type="evidence" value="ECO:0007669"/>
    <property type="project" value="RHEA"/>
</dbReference>
<dbReference type="GO" id="GO:0003729">
    <property type="term" value="F:mRNA binding"/>
    <property type="evidence" value="ECO:0000318"/>
    <property type="project" value="GO_Central"/>
</dbReference>
<dbReference type="GO" id="GO:0003724">
    <property type="term" value="F:RNA helicase activity"/>
    <property type="evidence" value="ECO:0000250"/>
    <property type="project" value="UniProtKB"/>
</dbReference>
<dbReference type="GO" id="GO:0006406">
    <property type="term" value="P:mRNA export from nucleus"/>
    <property type="evidence" value="ECO:0000250"/>
    <property type="project" value="UniProtKB"/>
</dbReference>
<dbReference type="GO" id="GO:0016973">
    <property type="term" value="P:poly(A)+ mRNA export from nucleus"/>
    <property type="evidence" value="ECO:0000318"/>
    <property type="project" value="GO_Central"/>
</dbReference>
<dbReference type="GO" id="GO:0006417">
    <property type="term" value="P:regulation of translation"/>
    <property type="evidence" value="ECO:0000250"/>
    <property type="project" value="UniProtKB"/>
</dbReference>
<dbReference type="GO" id="GO:0007286">
    <property type="term" value="P:spermatid development"/>
    <property type="evidence" value="ECO:0000250"/>
    <property type="project" value="UniProtKB"/>
</dbReference>
<dbReference type="CDD" id="cd18048">
    <property type="entry name" value="DEADc_DDX25"/>
    <property type="match status" value="1"/>
</dbReference>
<dbReference type="CDD" id="cd18787">
    <property type="entry name" value="SF2_C_DEAD"/>
    <property type="match status" value="1"/>
</dbReference>
<dbReference type="FunFam" id="3.40.50.300:FF:000318">
    <property type="entry name" value="ATP-dependent RNA helicase DDX19B"/>
    <property type="match status" value="1"/>
</dbReference>
<dbReference type="FunFam" id="3.40.50.300:FF:000357">
    <property type="entry name" value="ATP-dependent RNA helicase DDX19B"/>
    <property type="match status" value="1"/>
</dbReference>
<dbReference type="Gene3D" id="6.10.250.2170">
    <property type="match status" value="1"/>
</dbReference>
<dbReference type="Gene3D" id="3.40.50.300">
    <property type="entry name" value="P-loop containing nucleotide triphosphate hydrolases"/>
    <property type="match status" value="2"/>
</dbReference>
<dbReference type="InterPro" id="IPR011545">
    <property type="entry name" value="DEAD/DEAH_box_helicase_dom"/>
</dbReference>
<dbReference type="InterPro" id="IPR014001">
    <property type="entry name" value="Helicase_ATP-bd"/>
</dbReference>
<dbReference type="InterPro" id="IPR001650">
    <property type="entry name" value="Helicase_C-like"/>
</dbReference>
<dbReference type="InterPro" id="IPR027417">
    <property type="entry name" value="P-loop_NTPase"/>
</dbReference>
<dbReference type="InterPro" id="IPR014014">
    <property type="entry name" value="RNA_helicase_DEAD_Q_motif"/>
</dbReference>
<dbReference type="PANTHER" id="PTHR47958">
    <property type="entry name" value="ATP-DEPENDENT RNA HELICASE DBP3"/>
    <property type="match status" value="1"/>
</dbReference>
<dbReference type="Pfam" id="PF00270">
    <property type="entry name" value="DEAD"/>
    <property type="match status" value="1"/>
</dbReference>
<dbReference type="Pfam" id="PF00271">
    <property type="entry name" value="Helicase_C"/>
    <property type="match status" value="1"/>
</dbReference>
<dbReference type="SMART" id="SM00487">
    <property type="entry name" value="DEXDc"/>
    <property type="match status" value="1"/>
</dbReference>
<dbReference type="SMART" id="SM00490">
    <property type="entry name" value="HELICc"/>
    <property type="match status" value="1"/>
</dbReference>
<dbReference type="SUPFAM" id="SSF52540">
    <property type="entry name" value="P-loop containing nucleoside triphosphate hydrolases"/>
    <property type="match status" value="1"/>
</dbReference>
<dbReference type="PROSITE" id="PS51192">
    <property type="entry name" value="HELICASE_ATP_BIND_1"/>
    <property type="match status" value="1"/>
</dbReference>
<dbReference type="PROSITE" id="PS51194">
    <property type="entry name" value="HELICASE_CTER"/>
    <property type="match status" value="1"/>
</dbReference>
<dbReference type="PROSITE" id="PS51195">
    <property type="entry name" value="Q_MOTIF"/>
    <property type="match status" value="1"/>
</dbReference>
<feature type="chain" id="PRO_0000030813" description="ATP-dependent RNA helicase DDX25">
    <location>
        <begin position="1"/>
        <end position="483"/>
    </location>
</feature>
<feature type="domain" description="Helicase ATP-binding" evidence="3">
    <location>
        <begin position="130"/>
        <end position="300"/>
    </location>
</feature>
<feature type="domain" description="Helicase C-terminal" evidence="4">
    <location>
        <begin position="311"/>
        <end position="478"/>
    </location>
</feature>
<feature type="short sequence motif" description="Nuclear export signal" evidence="1">
    <location>
        <begin position="61"/>
        <end position="74"/>
    </location>
</feature>
<feature type="short sequence motif" description="Q motif">
    <location>
        <begin position="97"/>
        <end position="125"/>
    </location>
</feature>
<feature type="short sequence motif" description="Nuclear localization signal" evidence="1">
    <location>
        <begin position="100"/>
        <end position="114"/>
    </location>
</feature>
<feature type="short sequence motif" description="DEAD box">
    <location>
        <begin position="247"/>
        <end position="250"/>
    </location>
</feature>
<feature type="binding site" evidence="3">
    <location>
        <begin position="143"/>
        <end position="150"/>
    </location>
    <ligand>
        <name>ATP</name>
        <dbReference type="ChEBI" id="CHEBI:30616"/>
    </ligand>
</feature>
<feature type="splice variant" id="VSP_018875" description="In isoform 2." evidence="7 8">
    <location>
        <begin position="1"/>
        <end position="114"/>
    </location>
</feature>
<feature type="sequence conflict" description="In Ref. 1; AAF21371/AAU84667." evidence="9" ref="1">
    <original>H</original>
    <variation>N</variation>
    <location>
        <position position="21"/>
    </location>
</feature>
<feature type="sequence conflict" description="In Ref. 1; AAF21371/AAU84667." evidence="9" ref="1">
    <original>I</original>
    <variation>T</variation>
    <location>
        <position position="381"/>
    </location>
</feature>
<feature type="strand" evidence="10">
    <location>
        <begin position="312"/>
        <end position="318"/>
    </location>
</feature>
<feature type="helix" evidence="10">
    <location>
        <begin position="322"/>
        <end position="333"/>
    </location>
</feature>
<feature type="strand" evidence="10">
    <location>
        <begin position="339"/>
        <end position="344"/>
    </location>
</feature>
<feature type="helix" evidence="10">
    <location>
        <begin position="348"/>
        <end position="359"/>
    </location>
</feature>
<feature type="turn" evidence="10">
    <location>
        <begin position="360"/>
        <end position="362"/>
    </location>
</feature>
<feature type="strand" evidence="10">
    <location>
        <begin position="365"/>
        <end position="368"/>
    </location>
</feature>
<feature type="helix" evidence="10">
    <location>
        <begin position="374"/>
        <end position="385"/>
    </location>
</feature>
<feature type="strand" evidence="10">
    <location>
        <begin position="390"/>
        <end position="394"/>
    </location>
</feature>
<feature type="turn" evidence="10">
    <location>
        <begin position="400"/>
        <end position="402"/>
    </location>
</feature>
<feature type="strand" evidence="10">
    <location>
        <begin position="407"/>
        <end position="414"/>
    </location>
</feature>
<feature type="helix" evidence="10">
    <location>
        <begin position="425"/>
        <end position="432"/>
    </location>
</feature>
<feature type="strand" evidence="10">
    <location>
        <begin position="442"/>
        <end position="448"/>
    </location>
</feature>
<feature type="helix" evidence="10">
    <location>
        <begin position="450"/>
        <end position="452"/>
    </location>
</feature>
<feature type="helix" evidence="10">
    <location>
        <begin position="453"/>
        <end position="463"/>
    </location>
</feature>
<feature type="strand" evidence="10">
    <location>
        <begin position="468"/>
        <end position="470"/>
    </location>
</feature>
<name>DDX25_HUMAN</name>
<protein>
    <recommendedName>
        <fullName>ATP-dependent RNA helicase DDX25</fullName>
        <ecNumber>3.6.4.13</ecNumber>
    </recommendedName>
    <alternativeName>
        <fullName>DEAD box protein 25</fullName>
    </alternativeName>
    <alternativeName>
        <fullName>Gonadotropin-regulated testicular RNA helicase</fullName>
    </alternativeName>
</protein>
<proteinExistence type="evidence at protein level"/>
<evidence type="ECO:0000250" key="1"/>
<evidence type="ECO:0000250" key="2">
    <source>
        <dbReference type="UniProtKB" id="Q9QY15"/>
    </source>
</evidence>
<evidence type="ECO:0000255" key="3">
    <source>
        <dbReference type="PROSITE-ProRule" id="PRU00541"/>
    </source>
</evidence>
<evidence type="ECO:0000255" key="4">
    <source>
        <dbReference type="PROSITE-ProRule" id="PRU00542"/>
    </source>
</evidence>
<evidence type="ECO:0000269" key="5">
    <source>
    </source>
</evidence>
<evidence type="ECO:0000269" key="6">
    <source ref="2"/>
</evidence>
<evidence type="ECO:0000303" key="7">
    <source>
    </source>
</evidence>
<evidence type="ECO:0000303" key="8">
    <source>
    </source>
</evidence>
<evidence type="ECO:0000305" key="9"/>
<evidence type="ECO:0007829" key="10">
    <source>
        <dbReference type="PDB" id="2RB4"/>
    </source>
</evidence>
<comment type="function">
    <text evidence="1 5">ATP-dependent RNA helicase. Required for mRNA export and translation regulation during spermatid development (By similarity).</text>
</comment>
<comment type="catalytic activity">
    <reaction>
        <text>ATP + H2O = ADP + phosphate + H(+)</text>
        <dbReference type="Rhea" id="RHEA:13065"/>
        <dbReference type="ChEBI" id="CHEBI:15377"/>
        <dbReference type="ChEBI" id="CHEBI:15378"/>
        <dbReference type="ChEBI" id="CHEBI:30616"/>
        <dbReference type="ChEBI" id="CHEBI:43474"/>
        <dbReference type="ChEBI" id="CHEBI:456216"/>
        <dbReference type="EC" id="3.6.4.13"/>
    </reaction>
</comment>
<comment type="interaction">
    <interactant intactId="EBI-8787165">
        <id>Q9UHL0</id>
    </interactant>
    <interactant intactId="EBI-10271199">
        <id>Q8NI38</id>
        <label>NFKBID</label>
    </interactant>
    <organismsDiffer>false</organismsDiffer>
    <experiments>3</experiments>
</comment>
<comment type="interaction">
    <interactant intactId="EBI-8787165">
        <id>Q9UHL0</id>
    </interactant>
    <interactant intactId="EBI-1105213">
        <id>Q9UBB9</id>
        <label>TFIP11</label>
    </interactant>
    <organismsDiffer>false</organismsDiffer>
    <experiments>3</experiments>
</comment>
<comment type="subcellular location">
    <subcellularLocation>
        <location evidence="5">Cytoplasm</location>
    </subcellularLocation>
    <subcellularLocation>
        <location evidence="2">Nucleus</location>
    </subcellularLocation>
    <text evidence="2">Detected in both cytoplasm and nucleus of testicular cells. Also detected in chromatoid bodies of round spermatids (By similarity).</text>
</comment>
<comment type="alternative products">
    <event type="alternative initiation"/>
    <isoform>
        <id>Q9UHL0-1</id>
        <name>1</name>
        <sequence type="displayed"/>
    </isoform>
    <isoform>
        <id>Q9UHL0-2</id>
        <name>2</name>
        <sequence type="described" ref="VSP_018875"/>
    </isoform>
</comment>
<comment type="tissue specificity">
    <text evidence="5 6">Highly expressed in the Leydig and germ cells of the testis and weakly expressed in the pituitary and hypothalamus.</text>
</comment>
<comment type="induction">
    <text evidence="5">Up-regulated at transcriptional level by chorionic gonadotropin via cyclic AMP-induced androgen formation in the Leydig cell.</text>
</comment>
<comment type="PTM">
    <text evidence="1">Phosphorylated on threonine residues. The phosphorylated form is found in the cytoplasm but not in the nucleus (By similarity).</text>
</comment>
<comment type="similarity">
    <text evidence="9">Belongs to the DEAD box helicase family.</text>
</comment>
<comment type="online information" name="Atlas of Genetics and Cytogenetics in Oncology and Haematology">
    <link uri="https://atlasgeneticsoncology.org/gene/46826/DDX25"/>
</comment>
<sequence>MASLLWGGDAGAAESERLNSHFSNLSQPRKNLWGIKSTAVRNIDGSINNINEDDEEDVVDLAANSLLNKLIHQSLVESSHRVEVLQKDPSSPLYSVKTFEELRLKEELLKGIYAMGFNRPSKIQEMALPMMLAHPPQNLIAQSQSGTGKTAAFVLAMLSRVNALELFPQCLCLAPTYELALQTGRVVEQMGKFCVDVQVMYAIRGNRIPRGTDITKQIIIGTPGTVLDWCFKLKLIDLTKIRVFVLDEADVMIDTQGFSDHSIRIQRALPSECQMLLFSATFEDSVWHFAERIIPDPNVIKLRKEELTLNNIRQYYVLCEHRKDKYQALCNIYGSITIGQAIIFCQTRRNAKWLTVEMIQDGHQVSLLSGELTVEQRASIIQRFRDGKEKVLITTNVCARGIDVKQVTIVVNFDLPVKQGEEPDYETYLHRIGRTGRFGKKGLAFNMIEVDELPSLMKIQDHFNSSIKQLNAEDMDEIEKIDY</sequence>
<organism>
    <name type="scientific">Homo sapiens</name>
    <name type="common">Human</name>
    <dbReference type="NCBI Taxonomy" id="9606"/>
    <lineage>
        <taxon>Eukaryota</taxon>
        <taxon>Metazoa</taxon>
        <taxon>Chordata</taxon>
        <taxon>Craniata</taxon>
        <taxon>Vertebrata</taxon>
        <taxon>Euteleostomi</taxon>
        <taxon>Mammalia</taxon>
        <taxon>Eutheria</taxon>
        <taxon>Euarchontoglires</taxon>
        <taxon>Primates</taxon>
        <taxon>Haplorrhini</taxon>
        <taxon>Catarrhini</taxon>
        <taxon>Hominidae</taxon>
        <taxon>Homo</taxon>
    </lineage>
</organism>
<keyword id="KW-0002">3D-structure</keyword>
<keyword id="KW-0024">Alternative initiation</keyword>
<keyword id="KW-0067">ATP-binding</keyword>
<keyword id="KW-0963">Cytoplasm</keyword>
<keyword id="KW-0217">Developmental protein</keyword>
<keyword id="KW-0221">Differentiation</keyword>
<keyword id="KW-0347">Helicase</keyword>
<keyword id="KW-0378">Hydrolase</keyword>
<keyword id="KW-0509">mRNA transport</keyword>
<keyword id="KW-0547">Nucleotide-binding</keyword>
<keyword id="KW-0539">Nucleus</keyword>
<keyword id="KW-0597">Phosphoprotein</keyword>
<keyword id="KW-1267">Proteomics identification</keyword>
<keyword id="KW-1185">Reference proteome</keyword>
<keyword id="KW-0694">RNA-binding</keyword>
<keyword id="KW-0744">Spermatogenesis</keyword>
<keyword id="KW-0810">Translation regulation</keyword>
<keyword id="KW-0813">Transport</keyword>
<gene>
    <name type="primary">DDX25</name>
    <name type="synonym">GRTH</name>
</gene>